<gene>
    <name evidence="7" type="primary">PROSER1</name>
    <name type="synonym">C13orf23</name>
    <name evidence="5" type="synonym">KIAA2032</name>
</gene>
<feature type="chain" id="PRO_0000274309" description="Proline and serine-rich protein 1">
    <location>
        <begin position="1"/>
        <end position="944"/>
    </location>
</feature>
<feature type="region of interest" description="Disordered" evidence="1">
    <location>
        <begin position="233"/>
        <end position="285"/>
    </location>
</feature>
<feature type="region of interest" description="Disordered" evidence="1">
    <location>
        <begin position="369"/>
        <end position="396"/>
    </location>
</feature>
<feature type="region of interest" description="Disordered" evidence="1">
    <location>
        <begin position="608"/>
        <end position="633"/>
    </location>
</feature>
<feature type="region of interest" description="Disordered" evidence="1">
    <location>
        <begin position="912"/>
        <end position="944"/>
    </location>
</feature>
<feature type="compositionally biased region" description="Polar residues" evidence="1">
    <location>
        <begin position="248"/>
        <end position="274"/>
    </location>
</feature>
<feature type="compositionally biased region" description="Low complexity" evidence="1">
    <location>
        <begin position="275"/>
        <end position="285"/>
    </location>
</feature>
<feature type="compositionally biased region" description="Polar residues" evidence="1">
    <location>
        <begin position="932"/>
        <end position="944"/>
    </location>
</feature>
<feature type="modified residue" description="N-acetylmethionine" evidence="8">
    <location>
        <position position="1"/>
    </location>
</feature>
<feature type="splice variant" id="VSP_055641" description="In isoform 2." evidence="6">
    <location>
        <begin position="16"/>
        <end position="37"/>
    </location>
</feature>
<feature type="sequence variant" id="VAR_030253" description="In dbSNP:rs3751379." evidence="2 3">
    <original>V</original>
    <variation>A</variation>
    <location>
        <position position="571"/>
    </location>
</feature>
<feature type="sequence variant" id="VAR_030254" description="In dbSNP:rs17058955.">
    <original>S</original>
    <variation>T</variation>
    <location>
        <position position="847"/>
    </location>
</feature>
<feature type="sequence conflict" description="In Ref. 6; BAB14204." evidence="6" ref="6">
    <original>L</original>
    <variation>P</variation>
    <location>
        <position position="541"/>
    </location>
</feature>
<feature type="sequence conflict" description="In Ref. 6; BAB14204." evidence="6" ref="6">
    <original>L</original>
    <variation>S</variation>
    <location>
        <position position="666"/>
    </location>
</feature>
<feature type="sequence conflict" description="In Ref. 6; BAB14204." evidence="6" ref="6">
    <original>P</original>
    <variation>L</variation>
    <location>
        <position position="786"/>
    </location>
</feature>
<name>PRSR1_HUMAN</name>
<sequence>MDKKSFEMVLDEIRKAVLTEYKLKAIEYVHGYFSSEQVVDLLRYFSWAEPQLKAMKALQHKMVAVQPTEVVNILNCFTFSKDKLVALELLASNIIDAQNSRPIEDLFRVNMSEKKRCKRILEQAFKGGCKAPHAMISSCGTIPGNPYPKGRPSRINGIFPGTPLKKDGEECTNEGKGIAARILGPSKPPPSTYNPHKPVPYPIPPCRPHATIAPSAYNNAGLVPLANVIAPPPPPYTPNPVGTENEDLSNPSKPIQNQTFSTPASQLFSPHGSNPSTPAATPVPTASPVKAINHPSASAAATVSGMNLLNTVLPVFPGQVSSAVHTPQPSIPNPTVIRTPSLPTAPVTSIHSTTTTPVPSIFSGLVSLPGPSATPTAATPTPGPTPRSTLGSSEAFASTSAPFTSLPFSTSSSAASTSNPNSASLSSVFAGLPLPLPPTSQGLSNPTPVIAGGSTPSVAGPLGVNSPLLSALKGFLTSNDTNLINSSALSSAVTSGLASLSSLTLQNSDSSASAPNKCYAPSAIPTPQRTSTPGLALFPGLPSPVANSTSTPLTLPVQSPLATAASASTSVPVSCGSSASLLRGPHPGTSDLHISSTPAATTLPVMIKTEPTSPTPSAFKGPSHSGNPSHGTLGLSGTLGRAYTSTSVPISLSACLNPALSGLSSLSTPLNGSNPLSSISLPPHGSSTPIAPVFTALPSFTSLTNNFPLTGNPSLNPSVSLPGSLIATSSTAATSTSLPHPSSTAAVLSGLSASAPVSAAPFPLNLSTAVPSLFSVTQGPLSSSNPSYPGFSVSNTPSVTPALPSFPGLQAPSTVAAVTPLPVAATAPSPAPVLPGFASAFSSNFNSALVAQAGLSSGLQAAGSSVFPGLLSLPGIPGFPQNPSQSSLQELQHNAAAQSALLQQVHSASALESYPAQPDGFPSYPSAPGTPFSLQPSLSQSGWQ</sequence>
<dbReference type="EMBL" id="AB107354">
    <property type="protein sequence ID" value="BAC67659.1"/>
    <property type="status" value="ALT_INIT"/>
    <property type="molecule type" value="mRNA"/>
</dbReference>
<dbReference type="EMBL" id="AL833854">
    <property type="protein sequence ID" value="CAD38713.1"/>
    <property type="molecule type" value="mRNA"/>
</dbReference>
<dbReference type="EMBL" id="AL834435">
    <property type="protein sequence ID" value="CAD39095.1"/>
    <property type="molecule type" value="mRNA"/>
</dbReference>
<dbReference type="EMBL" id="BX647471">
    <property type="protein sequence ID" value="CAH56138.1"/>
    <property type="molecule type" value="mRNA"/>
</dbReference>
<dbReference type="EMBL" id="AL445590">
    <property type="status" value="NOT_ANNOTATED_CDS"/>
    <property type="molecule type" value="Genomic_DNA"/>
</dbReference>
<dbReference type="EMBL" id="CH471075">
    <property type="protein sequence ID" value="EAX08610.1"/>
    <property type="molecule type" value="Genomic_DNA"/>
</dbReference>
<dbReference type="EMBL" id="BC053566">
    <property type="protein sequence ID" value="AAH53566.1"/>
    <property type="molecule type" value="mRNA"/>
</dbReference>
<dbReference type="EMBL" id="BC064348">
    <property type="protein sequence ID" value="AAH64348.1"/>
    <property type="molecule type" value="mRNA"/>
</dbReference>
<dbReference type="EMBL" id="AK022723">
    <property type="protein sequence ID" value="BAB14204.1"/>
    <property type="status" value="ALT_INIT"/>
    <property type="molecule type" value="mRNA"/>
</dbReference>
<dbReference type="CCDS" id="CCDS45041.1">
    <molecule id="Q86XN7-2"/>
</dbReference>
<dbReference type="CCDS" id="CCDS9368.2">
    <molecule id="Q86XN7-1"/>
</dbReference>
<dbReference type="RefSeq" id="NP_079414.3">
    <molecule id="Q86XN7-1"/>
    <property type="nucleotide sequence ID" value="NM_025138.4"/>
</dbReference>
<dbReference type="RefSeq" id="NP_733837.2">
    <molecule id="Q86XN7-2"/>
    <property type="nucleotide sequence ID" value="NM_170719.4"/>
</dbReference>
<dbReference type="RefSeq" id="XP_005266602.1">
    <property type="nucleotide sequence ID" value="XM_005266545.3"/>
</dbReference>
<dbReference type="BioGRID" id="123178">
    <property type="interactions" value="31"/>
</dbReference>
<dbReference type="CORUM" id="Q86XN7"/>
<dbReference type="FunCoup" id="Q86XN7">
    <property type="interactions" value="2014"/>
</dbReference>
<dbReference type="IntAct" id="Q86XN7">
    <property type="interactions" value="16"/>
</dbReference>
<dbReference type="STRING" id="9606.ENSP00000332034"/>
<dbReference type="GlyCosmos" id="Q86XN7">
    <property type="glycosylation" value="1 site, 1 glycan"/>
</dbReference>
<dbReference type="GlyGen" id="Q86XN7">
    <property type="glycosylation" value="14 sites, 1 O-linked glycan (7 sites)"/>
</dbReference>
<dbReference type="iPTMnet" id="Q86XN7"/>
<dbReference type="PhosphoSitePlus" id="Q86XN7"/>
<dbReference type="BioMuta" id="PROSER1"/>
<dbReference type="DMDM" id="125950653"/>
<dbReference type="jPOST" id="Q86XN7"/>
<dbReference type="MassIVE" id="Q86XN7"/>
<dbReference type="PaxDb" id="9606-ENSP00000332034"/>
<dbReference type="PeptideAtlas" id="Q86XN7"/>
<dbReference type="ProteomicsDB" id="1319"/>
<dbReference type="ProteomicsDB" id="70304">
    <molecule id="Q86XN7-1"/>
</dbReference>
<dbReference type="Pumba" id="Q86XN7"/>
<dbReference type="ABCD" id="Q86XN7">
    <property type="antibodies" value="1 sequenced antibody"/>
</dbReference>
<dbReference type="Antibodypedia" id="67457">
    <property type="antibodies" value="61 antibodies from 15 providers"/>
</dbReference>
<dbReference type="DNASU" id="80209"/>
<dbReference type="Ensembl" id="ENST00000352251.8">
    <molecule id="Q86XN7-1"/>
    <property type="protein sequence ID" value="ENSP00000332034.4"/>
    <property type="gene ID" value="ENSG00000120685.20"/>
</dbReference>
<dbReference type="Ensembl" id="ENST00000625998.2">
    <molecule id="Q86XN7-2"/>
    <property type="protein sequence ID" value="ENSP00000486159.1"/>
    <property type="gene ID" value="ENSG00000120685.20"/>
</dbReference>
<dbReference type="GeneID" id="80209"/>
<dbReference type="KEGG" id="hsa:80209"/>
<dbReference type="MANE-Select" id="ENST00000352251.8">
    <property type="protein sequence ID" value="ENSP00000332034.4"/>
    <property type="RefSeq nucleotide sequence ID" value="NM_025138.5"/>
    <property type="RefSeq protein sequence ID" value="NP_079414.3"/>
</dbReference>
<dbReference type="UCSC" id="uc001uwy.5">
    <molecule id="Q86XN7-1"/>
    <property type="organism name" value="human"/>
</dbReference>
<dbReference type="AGR" id="HGNC:20291"/>
<dbReference type="CTD" id="80209"/>
<dbReference type="DisGeNET" id="80209"/>
<dbReference type="GeneCards" id="PROSER1"/>
<dbReference type="HGNC" id="HGNC:20291">
    <property type="gene designation" value="PROSER1"/>
</dbReference>
<dbReference type="HPA" id="ENSG00000120685">
    <property type="expression patterns" value="Low tissue specificity"/>
</dbReference>
<dbReference type="MIM" id="620773">
    <property type="type" value="gene"/>
</dbReference>
<dbReference type="neXtProt" id="NX_Q86XN7"/>
<dbReference type="OpenTargets" id="ENSG00000120685"/>
<dbReference type="PharmGKB" id="PA134912550"/>
<dbReference type="VEuPathDB" id="HostDB:ENSG00000120685"/>
<dbReference type="eggNOG" id="ENOG502QSVH">
    <property type="taxonomic scope" value="Eukaryota"/>
</dbReference>
<dbReference type="GeneTree" id="ENSGT00730000111188"/>
<dbReference type="HOGENOM" id="CLU_018622_0_0_1"/>
<dbReference type="InParanoid" id="Q86XN7"/>
<dbReference type="OMA" id="HKVAGYN"/>
<dbReference type="OrthoDB" id="5968166at2759"/>
<dbReference type="PAN-GO" id="Q86XN7">
    <property type="GO annotations" value="0 GO annotations based on evolutionary models"/>
</dbReference>
<dbReference type="PhylomeDB" id="Q86XN7"/>
<dbReference type="TreeFam" id="TF331494"/>
<dbReference type="PathwayCommons" id="Q86XN7"/>
<dbReference type="SignaLink" id="Q86XN7"/>
<dbReference type="BioGRID-ORCS" id="80209">
    <property type="hits" value="8 hits in 1154 CRISPR screens"/>
</dbReference>
<dbReference type="ChiTaRS" id="PROSER1">
    <property type="organism name" value="human"/>
</dbReference>
<dbReference type="GenomeRNAi" id="80209"/>
<dbReference type="Pharos" id="Q86XN7">
    <property type="development level" value="Tdark"/>
</dbReference>
<dbReference type="PRO" id="PR:Q86XN7"/>
<dbReference type="Proteomes" id="UP000005640">
    <property type="component" value="Chromosome 13"/>
</dbReference>
<dbReference type="RNAct" id="Q86XN7">
    <property type="molecule type" value="protein"/>
</dbReference>
<dbReference type="Bgee" id="ENSG00000120685">
    <property type="expression patterns" value="Expressed in secondary oocyte and 174 other cell types or tissues"/>
</dbReference>
<dbReference type="ExpressionAtlas" id="Q86XN7">
    <property type="expression patterns" value="baseline and differential"/>
</dbReference>
<dbReference type="InterPro" id="IPR028011">
    <property type="entry name" value="DUF4476"/>
</dbReference>
<dbReference type="InterPro" id="IPR042616">
    <property type="entry name" value="PROSER1"/>
</dbReference>
<dbReference type="PANTHER" id="PTHR14880">
    <property type="entry name" value="PROLINE AND SERINE-RICH PROTEIN 1"/>
    <property type="match status" value="1"/>
</dbReference>
<dbReference type="PANTHER" id="PTHR14880:SF2">
    <property type="entry name" value="PROLINE AND SERINE-RICH PROTEIN 1"/>
    <property type="match status" value="1"/>
</dbReference>
<dbReference type="Pfam" id="PF14771">
    <property type="entry name" value="DUF4476"/>
    <property type="match status" value="2"/>
</dbReference>
<proteinExistence type="evidence at protein level"/>
<comment type="function">
    <text evidence="4">Mediates OGT interaction with and O-GlcNAcylation of TET2 to control TET2 stabilization at enhancers and CpG islands (CGIs).</text>
</comment>
<comment type="subunit">
    <text evidence="4">Interacts with TET2 and OGT; this interaction mediates TET2 O-GlcNAcylation and stability by promoting the interaction between OGT and TET2 (PubMed:34667079). Interacts with KDM6A (PubMed:34667079). Interacts with TET1 (PubMed:34667079).</text>
</comment>
<comment type="alternative products">
    <event type="alternative splicing"/>
    <isoform>
        <id>Q86XN7-1</id>
        <name>1</name>
        <sequence type="displayed"/>
    </isoform>
    <isoform>
        <id>Q86XN7-2</id>
        <name>2</name>
        <sequence type="described" ref="VSP_055641"/>
    </isoform>
</comment>
<comment type="PTM">
    <text evidence="4">Glycosylated. Interaction with OGT leads to GlcNAcylation.</text>
</comment>
<comment type="sequence caution" evidence="6">
    <conflict type="erroneous initiation">
        <sequence resource="EMBL-CDS" id="BAB14204"/>
    </conflict>
    <text>Truncated N-terminus.</text>
</comment>
<comment type="sequence caution" evidence="6">
    <conflict type="erroneous initiation">
        <sequence resource="EMBL-CDS" id="BAC67659"/>
    </conflict>
    <text>Extended N-terminus.</text>
</comment>
<evidence type="ECO:0000256" key="1">
    <source>
        <dbReference type="SAM" id="MobiDB-lite"/>
    </source>
</evidence>
<evidence type="ECO:0000269" key="2">
    <source>
    </source>
</evidence>
<evidence type="ECO:0000269" key="3">
    <source>
    </source>
</evidence>
<evidence type="ECO:0000269" key="4">
    <source>
    </source>
</evidence>
<evidence type="ECO:0000303" key="5">
    <source ref="1"/>
</evidence>
<evidence type="ECO:0000305" key="6"/>
<evidence type="ECO:0000312" key="7">
    <source>
        <dbReference type="HGNC" id="HGNC:20291"/>
    </source>
</evidence>
<evidence type="ECO:0007744" key="8">
    <source>
    </source>
</evidence>
<reference key="1">
    <citation type="submission" date="2003-04" db="EMBL/GenBank/DDBJ databases">
        <title>The nucleotide sequence of a long cDNA clone isolated from human.</title>
        <authorList>
            <person name="Nagase T."/>
            <person name="Kikuno R."/>
            <person name="Ohara O."/>
        </authorList>
    </citation>
    <scope>NUCLEOTIDE SEQUENCE [LARGE SCALE MRNA] (ISOFORM 1)</scope>
    <source>
        <tissue>Brain</tissue>
    </source>
</reference>
<reference key="2">
    <citation type="journal article" date="2007" name="BMC Genomics">
        <title>The full-ORF clone resource of the German cDNA consortium.</title>
        <authorList>
            <person name="Bechtel S."/>
            <person name="Rosenfelder H."/>
            <person name="Duda A."/>
            <person name="Schmidt C.P."/>
            <person name="Ernst U."/>
            <person name="Wellenreuther R."/>
            <person name="Mehrle A."/>
            <person name="Schuster C."/>
            <person name="Bahr A."/>
            <person name="Bloecker H."/>
            <person name="Heubner D."/>
            <person name="Hoerlein A."/>
            <person name="Michel G."/>
            <person name="Wedler H."/>
            <person name="Koehrer K."/>
            <person name="Ottenwaelder B."/>
            <person name="Poustka A."/>
            <person name="Wiemann S."/>
            <person name="Schupp I."/>
        </authorList>
    </citation>
    <scope>NUCLEOTIDE SEQUENCE [LARGE SCALE MRNA] (ISOFORM 1)</scope>
    <source>
        <tissue>Amygdala</tissue>
        <tissue>Colon endothelium</tissue>
        <tissue>Melanoma</tissue>
    </source>
</reference>
<reference key="3">
    <citation type="journal article" date="2004" name="Nature">
        <title>The DNA sequence and analysis of human chromosome 13.</title>
        <authorList>
            <person name="Dunham A."/>
            <person name="Matthews L.H."/>
            <person name="Burton J."/>
            <person name="Ashurst J.L."/>
            <person name="Howe K.L."/>
            <person name="Ashcroft K.J."/>
            <person name="Beare D.M."/>
            <person name="Burford D.C."/>
            <person name="Hunt S.E."/>
            <person name="Griffiths-Jones S."/>
            <person name="Jones M.C."/>
            <person name="Keenan S.J."/>
            <person name="Oliver K."/>
            <person name="Scott C.E."/>
            <person name="Ainscough R."/>
            <person name="Almeida J.P."/>
            <person name="Ambrose K.D."/>
            <person name="Andrews D.T."/>
            <person name="Ashwell R.I.S."/>
            <person name="Babbage A.K."/>
            <person name="Bagguley C.L."/>
            <person name="Bailey J."/>
            <person name="Bannerjee R."/>
            <person name="Barlow K.F."/>
            <person name="Bates K."/>
            <person name="Beasley H."/>
            <person name="Bird C.P."/>
            <person name="Bray-Allen S."/>
            <person name="Brown A.J."/>
            <person name="Brown J.Y."/>
            <person name="Burrill W."/>
            <person name="Carder C."/>
            <person name="Carter N.P."/>
            <person name="Chapman J.C."/>
            <person name="Clamp M.E."/>
            <person name="Clark S.Y."/>
            <person name="Clarke G."/>
            <person name="Clee C.M."/>
            <person name="Clegg S.C."/>
            <person name="Cobley V."/>
            <person name="Collins J.E."/>
            <person name="Corby N."/>
            <person name="Coville G.J."/>
            <person name="Deloukas P."/>
            <person name="Dhami P."/>
            <person name="Dunham I."/>
            <person name="Dunn M."/>
            <person name="Earthrowl M.E."/>
            <person name="Ellington A.G."/>
            <person name="Faulkner L."/>
            <person name="Frankish A.G."/>
            <person name="Frankland J."/>
            <person name="French L."/>
            <person name="Garner P."/>
            <person name="Garnett J."/>
            <person name="Gilbert J.G.R."/>
            <person name="Gilson C.J."/>
            <person name="Ghori J."/>
            <person name="Grafham D.V."/>
            <person name="Gribble S.M."/>
            <person name="Griffiths C."/>
            <person name="Hall R.E."/>
            <person name="Hammond S."/>
            <person name="Harley J.L."/>
            <person name="Hart E.A."/>
            <person name="Heath P.D."/>
            <person name="Howden P.J."/>
            <person name="Huckle E.J."/>
            <person name="Hunt P.J."/>
            <person name="Hunt A.R."/>
            <person name="Johnson C."/>
            <person name="Johnson D."/>
            <person name="Kay M."/>
            <person name="Kimberley A.M."/>
            <person name="King A."/>
            <person name="Laird G.K."/>
            <person name="Langford C.J."/>
            <person name="Lawlor S."/>
            <person name="Leongamornlert D.A."/>
            <person name="Lloyd D.M."/>
            <person name="Lloyd C."/>
            <person name="Loveland J.E."/>
            <person name="Lovell J."/>
            <person name="Martin S."/>
            <person name="Mashreghi-Mohammadi M."/>
            <person name="McLaren S.J."/>
            <person name="McMurray A."/>
            <person name="Milne S."/>
            <person name="Moore M.J.F."/>
            <person name="Nickerson T."/>
            <person name="Palmer S.A."/>
            <person name="Pearce A.V."/>
            <person name="Peck A.I."/>
            <person name="Pelan S."/>
            <person name="Phillimore B."/>
            <person name="Porter K.M."/>
            <person name="Rice C.M."/>
            <person name="Searle S."/>
            <person name="Sehra H.K."/>
            <person name="Shownkeen R."/>
            <person name="Skuce C.D."/>
            <person name="Smith M."/>
            <person name="Steward C.A."/>
            <person name="Sycamore N."/>
            <person name="Tester J."/>
            <person name="Thomas D.W."/>
            <person name="Tracey A."/>
            <person name="Tromans A."/>
            <person name="Tubby B."/>
            <person name="Wall M."/>
            <person name="Wallis J.M."/>
            <person name="West A.P."/>
            <person name="Whitehead S.L."/>
            <person name="Willey D.L."/>
            <person name="Wilming L."/>
            <person name="Wray P.W."/>
            <person name="Wright M.W."/>
            <person name="Young L."/>
            <person name="Coulson A."/>
            <person name="Durbin R.M."/>
            <person name="Hubbard T."/>
            <person name="Sulston J.E."/>
            <person name="Beck S."/>
            <person name="Bentley D.R."/>
            <person name="Rogers J."/>
            <person name="Ross M.T."/>
        </authorList>
    </citation>
    <scope>NUCLEOTIDE SEQUENCE [LARGE SCALE GENOMIC DNA]</scope>
</reference>
<reference key="4">
    <citation type="submission" date="2005-07" db="EMBL/GenBank/DDBJ databases">
        <authorList>
            <person name="Mural R.J."/>
            <person name="Istrail S."/>
            <person name="Sutton G.G."/>
            <person name="Florea L."/>
            <person name="Halpern A.L."/>
            <person name="Mobarry C.M."/>
            <person name="Lippert R."/>
            <person name="Walenz B."/>
            <person name="Shatkay H."/>
            <person name="Dew I."/>
            <person name="Miller J.R."/>
            <person name="Flanigan M.J."/>
            <person name="Edwards N.J."/>
            <person name="Bolanos R."/>
            <person name="Fasulo D."/>
            <person name="Halldorsson B.V."/>
            <person name="Hannenhalli S."/>
            <person name="Turner R."/>
            <person name="Yooseph S."/>
            <person name="Lu F."/>
            <person name="Nusskern D.R."/>
            <person name="Shue B.C."/>
            <person name="Zheng X.H."/>
            <person name="Zhong F."/>
            <person name="Delcher A.L."/>
            <person name="Huson D.H."/>
            <person name="Kravitz S.A."/>
            <person name="Mouchard L."/>
            <person name="Reinert K."/>
            <person name="Remington K.A."/>
            <person name="Clark A.G."/>
            <person name="Waterman M.S."/>
            <person name="Eichler E.E."/>
            <person name="Adams M.D."/>
            <person name="Hunkapiller M.W."/>
            <person name="Myers E.W."/>
            <person name="Venter J.C."/>
        </authorList>
    </citation>
    <scope>NUCLEOTIDE SEQUENCE [LARGE SCALE GENOMIC DNA]</scope>
</reference>
<reference key="5">
    <citation type="journal article" date="2004" name="Genome Res.">
        <title>The status, quality, and expansion of the NIH full-length cDNA project: the Mammalian Gene Collection (MGC).</title>
        <authorList>
            <consortium name="The MGC Project Team"/>
        </authorList>
    </citation>
    <scope>NUCLEOTIDE SEQUENCE [LARGE SCALE MRNA] (ISOFORM 1)</scope>
    <scope>VARIANT ALA-571</scope>
    <source>
        <tissue>Brain</tissue>
        <tissue>PNS</tissue>
    </source>
</reference>
<reference key="6">
    <citation type="journal article" date="2004" name="Nat. Genet.">
        <title>Complete sequencing and characterization of 21,243 full-length human cDNAs.</title>
        <authorList>
            <person name="Ota T."/>
            <person name="Suzuki Y."/>
            <person name="Nishikawa T."/>
            <person name="Otsuki T."/>
            <person name="Sugiyama T."/>
            <person name="Irie R."/>
            <person name="Wakamatsu A."/>
            <person name="Hayashi K."/>
            <person name="Sato H."/>
            <person name="Nagai K."/>
            <person name="Kimura K."/>
            <person name="Makita H."/>
            <person name="Sekine M."/>
            <person name="Obayashi M."/>
            <person name="Nishi T."/>
            <person name="Shibahara T."/>
            <person name="Tanaka T."/>
            <person name="Ishii S."/>
            <person name="Yamamoto J."/>
            <person name="Saito K."/>
            <person name="Kawai Y."/>
            <person name="Isono Y."/>
            <person name="Nakamura Y."/>
            <person name="Nagahari K."/>
            <person name="Murakami K."/>
            <person name="Yasuda T."/>
            <person name="Iwayanagi T."/>
            <person name="Wagatsuma M."/>
            <person name="Shiratori A."/>
            <person name="Sudo H."/>
            <person name="Hosoiri T."/>
            <person name="Kaku Y."/>
            <person name="Kodaira H."/>
            <person name="Kondo H."/>
            <person name="Sugawara M."/>
            <person name="Takahashi M."/>
            <person name="Kanda K."/>
            <person name="Yokoi T."/>
            <person name="Furuya T."/>
            <person name="Kikkawa E."/>
            <person name="Omura Y."/>
            <person name="Abe K."/>
            <person name="Kamihara K."/>
            <person name="Katsuta N."/>
            <person name="Sato K."/>
            <person name="Tanikawa M."/>
            <person name="Yamazaki M."/>
            <person name="Ninomiya K."/>
            <person name="Ishibashi T."/>
            <person name="Yamashita H."/>
            <person name="Murakawa K."/>
            <person name="Fujimori K."/>
            <person name="Tanai H."/>
            <person name="Kimata M."/>
            <person name="Watanabe M."/>
            <person name="Hiraoka S."/>
            <person name="Chiba Y."/>
            <person name="Ishida S."/>
            <person name="Ono Y."/>
            <person name="Takiguchi S."/>
            <person name="Watanabe S."/>
            <person name="Yosida M."/>
            <person name="Hotuta T."/>
            <person name="Kusano J."/>
            <person name="Kanehori K."/>
            <person name="Takahashi-Fujii A."/>
            <person name="Hara H."/>
            <person name="Tanase T.-O."/>
            <person name="Nomura Y."/>
            <person name="Togiya S."/>
            <person name="Komai F."/>
            <person name="Hara R."/>
            <person name="Takeuchi K."/>
            <person name="Arita M."/>
            <person name="Imose N."/>
            <person name="Musashino K."/>
            <person name="Yuuki H."/>
            <person name="Oshima A."/>
            <person name="Sasaki N."/>
            <person name="Aotsuka S."/>
            <person name="Yoshikawa Y."/>
            <person name="Matsunawa H."/>
            <person name="Ichihara T."/>
            <person name="Shiohata N."/>
            <person name="Sano S."/>
            <person name="Moriya S."/>
            <person name="Momiyama H."/>
            <person name="Satoh N."/>
            <person name="Takami S."/>
            <person name="Terashima Y."/>
            <person name="Suzuki O."/>
            <person name="Nakagawa S."/>
            <person name="Senoh A."/>
            <person name="Mizoguchi H."/>
            <person name="Goto Y."/>
            <person name="Shimizu F."/>
            <person name="Wakebe H."/>
            <person name="Hishigaki H."/>
            <person name="Watanabe T."/>
            <person name="Sugiyama A."/>
            <person name="Takemoto M."/>
            <person name="Kawakami B."/>
            <person name="Yamazaki M."/>
            <person name="Watanabe K."/>
            <person name="Kumagai A."/>
            <person name="Itakura S."/>
            <person name="Fukuzumi Y."/>
            <person name="Fujimori Y."/>
            <person name="Komiyama M."/>
            <person name="Tashiro H."/>
            <person name="Tanigami A."/>
            <person name="Fujiwara T."/>
            <person name="Ono T."/>
            <person name="Yamada K."/>
            <person name="Fujii Y."/>
            <person name="Ozaki K."/>
            <person name="Hirao M."/>
            <person name="Ohmori Y."/>
            <person name="Kawabata A."/>
            <person name="Hikiji T."/>
            <person name="Kobatake N."/>
            <person name="Inagaki H."/>
            <person name="Ikema Y."/>
            <person name="Okamoto S."/>
            <person name="Okitani R."/>
            <person name="Kawakami T."/>
            <person name="Noguchi S."/>
            <person name="Itoh T."/>
            <person name="Shigeta K."/>
            <person name="Senba T."/>
            <person name="Matsumura K."/>
            <person name="Nakajima Y."/>
            <person name="Mizuno T."/>
            <person name="Morinaga M."/>
            <person name="Sasaki M."/>
            <person name="Togashi T."/>
            <person name="Oyama M."/>
            <person name="Hata H."/>
            <person name="Watanabe M."/>
            <person name="Komatsu T."/>
            <person name="Mizushima-Sugano J."/>
            <person name="Satoh T."/>
            <person name="Shirai Y."/>
            <person name="Takahashi Y."/>
            <person name="Nakagawa K."/>
            <person name="Okumura K."/>
            <person name="Nagase T."/>
            <person name="Nomura N."/>
            <person name="Kikuchi H."/>
            <person name="Masuho Y."/>
            <person name="Yamashita R."/>
            <person name="Nakai K."/>
            <person name="Yada T."/>
            <person name="Nakamura Y."/>
            <person name="Ohara O."/>
            <person name="Isogai T."/>
            <person name="Sugano S."/>
        </authorList>
    </citation>
    <scope>NUCLEOTIDE SEQUENCE [LARGE SCALE MRNA] OF 165-944 (ISOFORMS 1/2)</scope>
    <scope>VARIANT ALA-571</scope>
    <source>
        <tissue>Teratocarcinoma</tissue>
    </source>
</reference>
<reference key="7">
    <citation type="journal article" date="2009" name="Anal. Chem.">
        <title>Lys-N and trypsin cover complementary parts of the phosphoproteome in a refined SCX-based approach.</title>
        <authorList>
            <person name="Gauci S."/>
            <person name="Helbig A.O."/>
            <person name="Slijper M."/>
            <person name="Krijgsveld J."/>
            <person name="Heck A.J."/>
            <person name="Mohammed S."/>
        </authorList>
    </citation>
    <scope>IDENTIFICATION BY MASS SPECTROMETRY [LARGE SCALE ANALYSIS]</scope>
</reference>
<reference key="8">
    <citation type="journal article" date="2012" name="Proc. Natl. Acad. Sci. U.S.A.">
        <title>N-terminal acetylome analyses and functional insights of the N-terminal acetyltransferase NatB.</title>
        <authorList>
            <person name="Van Damme P."/>
            <person name="Lasa M."/>
            <person name="Polevoda B."/>
            <person name="Gazquez C."/>
            <person name="Elosegui-Artola A."/>
            <person name="Kim D.S."/>
            <person name="De Juan-Pardo E."/>
            <person name="Demeyer K."/>
            <person name="Hole K."/>
            <person name="Larrea E."/>
            <person name="Timmerman E."/>
            <person name="Prieto J."/>
            <person name="Arnesen T."/>
            <person name="Sherman F."/>
            <person name="Gevaert K."/>
            <person name="Aldabe R."/>
        </authorList>
    </citation>
    <scope>ACETYLATION [LARGE SCALE ANALYSIS] AT MET-1</scope>
    <scope>IDENTIFICATION BY MASS SPECTROMETRY [LARGE SCALE ANALYSIS]</scope>
</reference>
<reference key="9">
    <citation type="journal article" date="2013" name="J. Proteome Res.">
        <title>Toward a comprehensive characterization of a human cancer cell phosphoproteome.</title>
        <authorList>
            <person name="Zhou H."/>
            <person name="Di Palma S."/>
            <person name="Preisinger C."/>
            <person name="Peng M."/>
            <person name="Polat A.N."/>
            <person name="Heck A.J."/>
            <person name="Mohammed S."/>
        </authorList>
    </citation>
    <scope>IDENTIFICATION BY MASS SPECTROMETRY [LARGE SCALE ANALYSIS]</scope>
    <source>
        <tissue>Cervix carcinoma</tissue>
        <tissue>Erythroleukemia</tissue>
    </source>
</reference>
<reference key="10">
    <citation type="journal article" date="2022" name="Life. Sci Alliance">
        <title>PROSER1 mediates TET2 O-GlcNAcylation to regulate DNA demethylation on UTX-dependent enhancers and CpG islands.</title>
        <authorList>
            <person name="Wang X."/>
            <person name="Rosikiewicz W."/>
            <person name="Sedkov Y."/>
            <person name="Martinez T."/>
            <person name="Hansen B.S."/>
            <person name="Schreiner P."/>
            <person name="Christensen J."/>
            <person name="Xu B."/>
            <person name="Pruett-Miller S.M."/>
            <person name="Helin K."/>
            <person name="Herz H.M."/>
        </authorList>
    </citation>
    <scope>FUNCTION</scope>
    <scope>INTERACTION WITH KDM6A; OGT; TET1 AND TET2</scope>
    <scope>GLYCOSYLATION</scope>
</reference>
<organism>
    <name type="scientific">Homo sapiens</name>
    <name type="common">Human</name>
    <dbReference type="NCBI Taxonomy" id="9606"/>
    <lineage>
        <taxon>Eukaryota</taxon>
        <taxon>Metazoa</taxon>
        <taxon>Chordata</taxon>
        <taxon>Craniata</taxon>
        <taxon>Vertebrata</taxon>
        <taxon>Euteleostomi</taxon>
        <taxon>Mammalia</taxon>
        <taxon>Eutheria</taxon>
        <taxon>Euarchontoglires</taxon>
        <taxon>Primates</taxon>
        <taxon>Haplorrhini</taxon>
        <taxon>Catarrhini</taxon>
        <taxon>Hominidae</taxon>
        <taxon>Homo</taxon>
    </lineage>
</organism>
<accession>Q86XN7</accession>
<accession>A6NJ97</accession>
<accession>Q6P2S2</accession>
<accession>Q7Z3X5</accession>
<accession>Q8N3D2</accession>
<accession>Q8N3P1</accession>
<accession>Q9H9M1</accession>
<protein>
    <recommendedName>
        <fullName evidence="6">Proline and serine-rich protein 1</fullName>
    </recommendedName>
</protein>
<keyword id="KW-0007">Acetylation</keyword>
<keyword id="KW-0025">Alternative splicing</keyword>
<keyword id="KW-1267">Proteomics identification</keyword>
<keyword id="KW-1185">Reference proteome</keyword>